<keyword id="KW-0002">3D-structure</keyword>
<keyword id="KW-0067">ATP-binding</keyword>
<keyword id="KW-0418">Kinase</keyword>
<keyword id="KW-0545">Nucleotide biosynthesis</keyword>
<keyword id="KW-0547">Nucleotide-binding</keyword>
<keyword id="KW-1185">Reference proteome</keyword>
<keyword id="KW-0808">Transferase</keyword>
<comment type="function">
    <text evidence="1">Phosphorylation of dTMP to form dTDP in both de novo and salvage pathways of dTTP synthesis.</text>
</comment>
<comment type="catalytic activity">
    <reaction evidence="1">
        <text>dTMP + ATP = dTDP + ADP</text>
        <dbReference type="Rhea" id="RHEA:13517"/>
        <dbReference type="ChEBI" id="CHEBI:30616"/>
        <dbReference type="ChEBI" id="CHEBI:58369"/>
        <dbReference type="ChEBI" id="CHEBI:63528"/>
        <dbReference type="ChEBI" id="CHEBI:456216"/>
        <dbReference type="EC" id="2.7.4.9"/>
    </reaction>
</comment>
<comment type="similarity">
    <text evidence="1">Belongs to the thymidylate kinase family.</text>
</comment>
<protein>
    <recommendedName>
        <fullName evidence="1">Thymidylate kinase</fullName>
        <ecNumber evidence="1">2.7.4.9</ecNumber>
    </recommendedName>
    <alternativeName>
        <fullName evidence="1">dTMP kinase</fullName>
    </alternativeName>
</protein>
<reference key="1">
    <citation type="submission" date="2004-11" db="EMBL/GenBank/DDBJ databases">
        <title>Complete genome sequence of Thermus thermophilus HB8.</title>
        <authorList>
            <person name="Masui R."/>
            <person name="Kurokawa K."/>
            <person name="Nakagawa N."/>
            <person name="Tokunaga F."/>
            <person name="Koyama Y."/>
            <person name="Shibata T."/>
            <person name="Oshima T."/>
            <person name="Yokoyama S."/>
            <person name="Yasunaga T."/>
            <person name="Kuramitsu S."/>
        </authorList>
    </citation>
    <scope>NUCLEOTIDE SEQUENCE [LARGE SCALE GENOMIC DNA]</scope>
    <source>
        <strain>ATCC 27634 / DSM 579 / HB8</strain>
    </source>
</reference>
<evidence type="ECO:0000255" key="1">
    <source>
        <dbReference type="HAMAP-Rule" id="MF_00165"/>
    </source>
</evidence>
<evidence type="ECO:0007829" key="2">
    <source>
        <dbReference type="PDB" id="5X7J"/>
    </source>
</evidence>
<evidence type="ECO:0007829" key="3">
    <source>
        <dbReference type="PDB" id="5X86"/>
    </source>
</evidence>
<feature type="chain" id="PRO_0000155361" description="Thymidylate kinase">
    <location>
        <begin position="1"/>
        <end position="198"/>
    </location>
</feature>
<feature type="binding site" evidence="1">
    <location>
        <begin position="10"/>
        <end position="17"/>
    </location>
    <ligand>
        <name>ATP</name>
        <dbReference type="ChEBI" id="CHEBI:30616"/>
    </ligand>
</feature>
<feature type="strand" evidence="3">
    <location>
        <begin position="4"/>
        <end position="11"/>
    </location>
</feature>
<feature type="helix" evidence="3">
    <location>
        <begin position="16"/>
        <end position="29"/>
    </location>
</feature>
<feature type="strand" evidence="3">
    <location>
        <begin position="34"/>
        <end position="38"/>
    </location>
</feature>
<feature type="turn" evidence="3">
    <location>
        <begin position="39"/>
        <end position="41"/>
    </location>
</feature>
<feature type="helix" evidence="3">
    <location>
        <begin position="45"/>
        <end position="53"/>
    </location>
</feature>
<feature type="helix" evidence="3">
    <location>
        <begin position="58"/>
        <end position="75"/>
    </location>
</feature>
<feature type="helix" evidence="3">
    <location>
        <begin position="77"/>
        <end position="82"/>
    </location>
</feature>
<feature type="strand" evidence="3">
    <location>
        <begin position="86"/>
        <end position="91"/>
    </location>
</feature>
<feature type="helix" evidence="3">
    <location>
        <begin position="93"/>
        <end position="99"/>
    </location>
</feature>
<feature type="turn" evidence="3">
    <location>
        <begin position="100"/>
        <end position="104"/>
    </location>
</feature>
<feature type="helix" evidence="3">
    <location>
        <begin position="108"/>
        <end position="115"/>
    </location>
</feature>
<feature type="turn" evidence="2">
    <location>
        <begin position="119"/>
        <end position="121"/>
    </location>
</feature>
<feature type="strand" evidence="3">
    <location>
        <begin position="125"/>
        <end position="131"/>
    </location>
</feature>
<feature type="helix" evidence="3">
    <location>
        <begin position="134"/>
        <end position="136"/>
    </location>
</feature>
<feature type="helix" evidence="2">
    <location>
        <begin position="145"/>
        <end position="147"/>
    </location>
</feature>
<feature type="helix" evidence="3">
    <location>
        <begin position="152"/>
        <end position="168"/>
    </location>
</feature>
<feature type="turn" evidence="3">
    <location>
        <begin position="170"/>
        <end position="172"/>
    </location>
</feature>
<feature type="strand" evidence="3">
    <location>
        <begin position="173"/>
        <end position="177"/>
    </location>
</feature>
<feature type="helix" evidence="3">
    <location>
        <begin position="182"/>
        <end position="193"/>
    </location>
</feature>
<feature type="helix" evidence="3">
    <location>
        <begin position="194"/>
        <end position="196"/>
    </location>
</feature>
<gene>
    <name evidence="1" type="primary">tmk</name>
    <name type="ordered locus">TTHA1607</name>
</gene>
<sequence>MPGLFLTLEGLDGSGKTTQARRLAAFLEAQGRPVLLTREPGGGLPEVRSLLLTQELSPEAEYLLFSADRAEHVRKVILPGLAAGKVVISDRYLDSSLAYQGYGRGLPLPWLREVAREATRGLKPRLTFLLDLPPEAALRRVRRPDRLEGLGLEFFRRVREGYLALARAEPGRFVVLDATLPEEEIARAIQAHLRPLLP</sequence>
<organism>
    <name type="scientific">Thermus thermophilus (strain ATCC 27634 / DSM 579 / HB8)</name>
    <dbReference type="NCBI Taxonomy" id="300852"/>
    <lineage>
        <taxon>Bacteria</taxon>
        <taxon>Thermotogati</taxon>
        <taxon>Deinococcota</taxon>
        <taxon>Deinococci</taxon>
        <taxon>Thermales</taxon>
        <taxon>Thermaceae</taxon>
        <taxon>Thermus</taxon>
    </lineage>
</organism>
<proteinExistence type="evidence at protein level"/>
<accession>Q5SHX3</accession>
<dbReference type="EC" id="2.7.4.9" evidence="1"/>
<dbReference type="EMBL" id="AP008226">
    <property type="protein sequence ID" value="BAD71430.1"/>
    <property type="molecule type" value="Genomic_DNA"/>
</dbReference>
<dbReference type="RefSeq" id="WP_011173647.1">
    <property type="nucleotide sequence ID" value="NC_006461.1"/>
</dbReference>
<dbReference type="RefSeq" id="YP_144873.1">
    <property type="nucleotide sequence ID" value="NC_006461.1"/>
</dbReference>
<dbReference type="PDB" id="5X7J">
    <property type="method" value="X-ray"/>
    <property type="resolution" value="1.84 A"/>
    <property type="chains" value="A/B=1-198"/>
</dbReference>
<dbReference type="PDB" id="5X86">
    <property type="method" value="X-ray"/>
    <property type="resolution" value="1.19 A"/>
    <property type="chains" value="A/B=1-198"/>
</dbReference>
<dbReference type="PDB" id="5X8A">
    <property type="method" value="X-ray"/>
    <property type="resolution" value="2.51 A"/>
    <property type="chains" value="A/B=1-198"/>
</dbReference>
<dbReference type="PDB" id="5X8B">
    <property type="method" value="X-ray"/>
    <property type="resolution" value="1.39 A"/>
    <property type="chains" value="A/B=1-198"/>
</dbReference>
<dbReference type="PDB" id="5X8C">
    <property type="method" value="X-ray"/>
    <property type="resolution" value="2.07 A"/>
    <property type="chains" value="A/B=1-198"/>
</dbReference>
<dbReference type="PDB" id="5X8D">
    <property type="method" value="X-ray"/>
    <property type="resolution" value="2.26 A"/>
    <property type="chains" value="A/B=1-198"/>
</dbReference>
<dbReference type="PDB" id="5X8J">
    <property type="method" value="X-ray"/>
    <property type="resolution" value="1.80 A"/>
    <property type="chains" value="A/B=1-198"/>
</dbReference>
<dbReference type="PDB" id="5X8K">
    <property type="method" value="X-ray"/>
    <property type="resolution" value="1.67 A"/>
    <property type="chains" value="A/B=1-198"/>
</dbReference>
<dbReference type="PDB" id="5X8V">
    <property type="method" value="X-ray"/>
    <property type="resolution" value="1.66 A"/>
    <property type="chains" value="A/B=1-198"/>
</dbReference>
<dbReference type="PDB" id="5X98">
    <property type="method" value="X-ray"/>
    <property type="resolution" value="1.76 A"/>
    <property type="chains" value="A/B=1-198"/>
</dbReference>
<dbReference type="PDB" id="5X99">
    <property type="method" value="X-ray"/>
    <property type="resolution" value="1.73 A"/>
    <property type="chains" value="A/B=1-198"/>
</dbReference>
<dbReference type="PDB" id="5XAK">
    <property type="method" value="X-ray"/>
    <property type="resolution" value="1.50 A"/>
    <property type="chains" value="A/B=1-198"/>
</dbReference>
<dbReference type="PDB" id="5XAL">
    <property type="method" value="X-ray"/>
    <property type="resolution" value="1.84 A"/>
    <property type="chains" value="A/B=1-198"/>
</dbReference>
<dbReference type="PDB" id="5XT8">
    <property type="method" value="X-ray"/>
    <property type="resolution" value="2.01 A"/>
    <property type="chains" value="A/B=1-198"/>
</dbReference>
<dbReference type="PDB" id="5ZAX">
    <property type="method" value="X-ray"/>
    <property type="resolution" value="2.36 A"/>
    <property type="chains" value="A/B=1-198"/>
</dbReference>
<dbReference type="PDB" id="5ZB0">
    <property type="method" value="X-ray"/>
    <property type="resolution" value="1.19 A"/>
    <property type="chains" value="A/B=1-198"/>
</dbReference>
<dbReference type="PDB" id="5ZB4">
    <property type="method" value="X-ray"/>
    <property type="resolution" value="1.92 A"/>
    <property type="chains" value="A/B=1-198"/>
</dbReference>
<dbReference type="PDBsum" id="5X7J"/>
<dbReference type="PDBsum" id="5X86"/>
<dbReference type="PDBsum" id="5X8A"/>
<dbReference type="PDBsum" id="5X8B"/>
<dbReference type="PDBsum" id="5X8C"/>
<dbReference type="PDBsum" id="5X8D"/>
<dbReference type="PDBsum" id="5X8J"/>
<dbReference type="PDBsum" id="5X8K"/>
<dbReference type="PDBsum" id="5X8V"/>
<dbReference type="PDBsum" id="5X98"/>
<dbReference type="PDBsum" id="5X99"/>
<dbReference type="PDBsum" id="5XAK"/>
<dbReference type="PDBsum" id="5XAL"/>
<dbReference type="PDBsum" id="5XT8"/>
<dbReference type="PDBsum" id="5ZAX"/>
<dbReference type="PDBsum" id="5ZB0"/>
<dbReference type="PDBsum" id="5ZB4"/>
<dbReference type="SMR" id="Q5SHX3"/>
<dbReference type="EnsemblBacteria" id="BAD71430">
    <property type="protein sequence ID" value="BAD71430"/>
    <property type="gene ID" value="BAD71430"/>
</dbReference>
<dbReference type="GeneID" id="3169786"/>
<dbReference type="KEGG" id="ttj:TTHA1607"/>
<dbReference type="PATRIC" id="fig|300852.9.peg.1577"/>
<dbReference type="eggNOG" id="COG0125">
    <property type="taxonomic scope" value="Bacteria"/>
</dbReference>
<dbReference type="HOGENOM" id="CLU_049131_0_2_0"/>
<dbReference type="PhylomeDB" id="Q5SHX3"/>
<dbReference type="BRENDA" id="2.7.4.9">
    <property type="organism ID" value="2305"/>
</dbReference>
<dbReference type="Proteomes" id="UP000000532">
    <property type="component" value="Chromosome"/>
</dbReference>
<dbReference type="GO" id="GO:0005829">
    <property type="term" value="C:cytosol"/>
    <property type="evidence" value="ECO:0007669"/>
    <property type="project" value="TreeGrafter"/>
</dbReference>
<dbReference type="GO" id="GO:0005524">
    <property type="term" value="F:ATP binding"/>
    <property type="evidence" value="ECO:0007669"/>
    <property type="project" value="UniProtKB-UniRule"/>
</dbReference>
<dbReference type="GO" id="GO:0004798">
    <property type="term" value="F:dTMP kinase activity"/>
    <property type="evidence" value="ECO:0007669"/>
    <property type="project" value="UniProtKB-UniRule"/>
</dbReference>
<dbReference type="GO" id="GO:0006233">
    <property type="term" value="P:dTDP biosynthetic process"/>
    <property type="evidence" value="ECO:0007669"/>
    <property type="project" value="InterPro"/>
</dbReference>
<dbReference type="GO" id="GO:0006235">
    <property type="term" value="P:dTTP biosynthetic process"/>
    <property type="evidence" value="ECO:0007669"/>
    <property type="project" value="UniProtKB-UniRule"/>
</dbReference>
<dbReference type="GO" id="GO:0006227">
    <property type="term" value="P:dUDP biosynthetic process"/>
    <property type="evidence" value="ECO:0007669"/>
    <property type="project" value="TreeGrafter"/>
</dbReference>
<dbReference type="CDD" id="cd01672">
    <property type="entry name" value="TMPK"/>
    <property type="match status" value="1"/>
</dbReference>
<dbReference type="FunFam" id="3.40.50.300:FF:000225">
    <property type="entry name" value="Thymidylate kinase"/>
    <property type="match status" value="1"/>
</dbReference>
<dbReference type="Gene3D" id="3.40.50.300">
    <property type="entry name" value="P-loop containing nucleotide triphosphate hydrolases"/>
    <property type="match status" value="1"/>
</dbReference>
<dbReference type="HAMAP" id="MF_00165">
    <property type="entry name" value="Thymidylate_kinase"/>
    <property type="match status" value="1"/>
</dbReference>
<dbReference type="InterPro" id="IPR027417">
    <property type="entry name" value="P-loop_NTPase"/>
</dbReference>
<dbReference type="InterPro" id="IPR039430">
    <property type="entry name" value="Thymidylate_kin-like_dom"/>
</dbReference>
<dbReference type="InterPro" id="IPR018095">
    <property type="entry name" value="Thymidylate_kin_CS"/>
</dbReference>
<dbReference type="InterPro" id="IPR018094">
    <property type="entry name" value="Thymidylate_kinase"/>
</dbReference>
<dbReference type="NCBIfam" id="TIGR00041">
    <property type="entry name" value="DTMP_kinase"/>
    <property type="match status" value="1"/>
</dbReference>
<dbReference type="PANTHER" id="PTHR10344">
    <property type="entry name" value="THYMIDYLATE KINASE"/>
    <property type="match status" value="1"/>
</dbReference>
<dbReference type="PANTHER" id="PTHR10344:SF4">
    <property type="entry name" value="UMP-CMP KINASE 2, MITOCHONDRIAL"/>
    <property type="match status" value="1"/>
</dbReference>
<dbReference type="Pfam" id="PF02223">
    <property type="entry name" value="Thymidylate_kin"/>
    <property type="match status" value="1"/>
</dbReference>
<dbReference type="SUPFAM" id="SSF52540">
    <property type="entry name" value="P-loop containing nucleoside triphosphate hydrolases"/>
    <property type="match status" value="1"/>
</dbReference>
<dbReference type="PROSITE" id="PS01331">
    <property type="entry name" value="THYMIDYLATE_KINASE"/>
    <property type="match status" value="1"/>
</dbReference>
<name>KTHY_THET8</name>